<organism>
    <name type="scientific">Salinispora tropica (strain ATCC BAA-916 / DSM 44818 / JCM 13857 / NBRC 105044 / CNB-440)</name>
    <dbReference type="NCBI Taxonomy" id="369723"/>
    <lineage>
        <taxon>Bacteria</taxon>
        <taxon>Bacillati</taxon>
        <taxon>Actinomycetota</taxon>
        <taxon>Actinomycetes</taxon>
        <taxon>Micromonosporales</taxon>
        <taxon>Micromonosporaceae</taxon>
        <taxon>Salinispora</taxon>
    </lineage>
</organism>
<comment type="similarity">
    <text evidence="1">Belongs to the bacterial ribosomal protein bL36 family.</text>
</comment>
<name>RL36_SALTO</name>
<reference key="1">
    <citation type="journal article" date="2007" name="Proc. Natl. Acad. Sci. U.S.A.">
        <title>Genome sequencing reveals complex secondary metabolome in the marine actinomycete Salinispora tropica.</title>
        <authorList>
            <person name="Udwary D.W."/>
            <person name="Zeigler L."/>
            <person name="Asolkar R.N."/>
            <person name="Singan V."/>
            <person name="Lapidus A."/>
            <person name="Fenical W."/>
            <person name="Jensen P.R."/>
            <person name="Moore B.S."/>
        </authorList>
    </citation>
    <scope>NUCLEOTIDE SEQUENCE [LARGE SCALE GENOMIC DNA]</scope>
    <source>
        <strain>ATCC BAA-916 / DSM 44818 / JCM 13857 / NBRC 105044 / CNB-440</strain>
    </source>
</reference>
<gene>
    <name evidence="1" type="primary">rpmJ</name>
    <name type="ordered locus">Strop_3899</name>
</gene>
<keyword id="KW-1185">Reference proteome</keyword>
<keyword id="KW-0687">Ribonucleoprotein</keyword>
<keyword id="KW-0689">Ribosomal protein</keyword>
<sequence length="37" mass="4385">MKVKPSVKRICNKCRVIRRHGRVMVICADPRHKQRQG</sequence>
<feature type="chain" id="PRO_1000078485" description="Large ribosomal subunit protein bL36">
    <location>
        <begin position="1"/>
        <end position="37"/>
    </location>
</feature>
<proteinExistence type="inferred from homology"/>
<dbReference type="EMBL" id="CP000667">
    <property type="protein sequence ID" value="ABP56329.1"/>
    <property type="molecule type" value="Genomic_DNA"/>
</dbReference>
<dbReference type="RefSeq" id="WP_012015104.1">
    <property type="nucleotide sequence ID" value="NC_009380.1"/>
</dbReference>
<dbReference type="SMR" id="A4XBM2"/>
<dbReference type="STRING" id="369723.Strop_3899"/>
<dbReference type="KEGG" id="stp:Strop_3899"/>
<dbReference type="PATRIC" id="fig|369723.5.peg.4024"/>
<dbReference type="eggNOG" id="COG0257">
    <property type="taxonomic scope" value="Bacteria"/>
</dbReference>
<dbReference type="HOGENOM" id="CLU_135723_6_2_11"/>
<dbReference type="Proteomes" id="UP000000235">
    <property type="component" value="Chromosome"/>
</dbReference>
<dbReference type="GO" id="GO:0005737">
    <property type="term" value="C:cytoplasm"/>
    <property type="evidence" value="ECO:0007669"/>
    <property type="project" value="UniProtKB-ARBA"/>
</dbReference>
<dbReference type="GO" id="GO:1990904">
    <property type="term" value="C:ribonucleoprotein complex"/>
    <property type="evidence" value="ECO:0007669"/>
    <property type="project" value="UniProtKB-KW"/>
</dbReference>
<dbReference type="GO" id="GO:0005840">
    <property type="term" value="C:ribosome"/>
    <property type="evidence" value="ECO:0007669"/>
    <property type="project" value="UniProtKB-KW"/>
</dbReference>
<dbReference type="GO" id="GO:0003735">
    <property type="term" value="F:structural constituent of ribosome"/>
    <property type="evidence" value="ECO:0007669"/>
    <property type="project" value="InterPro"/>
</dbReference>
<dbReference type="GO" id="GO:0006412">
    <property type="term" value="P:translation"/>
    <property type="evidence" value="ECO:0007669"/>
    <property type="project" value="UniProtKB-UniRule"/>
</dbReference>
<dbReference type="HAMAP" id="MF_00251">
    <property type="entry name" value="Ribosomal_bL36"/>
    <property type="match status" value="1"/>
</dbReference>
<dbReference type="InterPro" id="IPR000473">
    <property type="entry name" value="Ribosomal_bL36"/>
</dbReference>
<dbReference type="InterPro" id="IPR035977">
    <property type="entry name" value="Ribosomal_bL36_sp"/>
</dbReference>
<dbReference type="NCBIfam" id="TIGR01022">
    <property type="entry name" value="rpmJ_bact"/>
    <property type="match status" value="1"/>
</dbReference>
<dbReference type="PANTHER" id="PTHR42888">
    <property type="entry name" value="50S RIBOSOMAL PROTEIN L36, CHLOROPLASTIC"/>
    <property type="match status" value="1"/>
</dbReference>
<dbReference type="PANTHER" id="PTHR42888:SF1">
    <property type="entry name" value="LARGE RIBOSOMAL SUBUNIT PROTEIN BL36C"/>
    <property type="match status" value="1"/>
</dbReference>
<dbReference type="Pfam" id="PF00444">
    <property type="entry name" value="Ribosomal_L36"/>
    <property type="match status" value="1"/>
</dbReference>
<dbReference type="SUPFAM" id="SSF57840">
    <property type="entry name" value="Ribosomal protein L36"/>
    <property type="match status" value="1"/>
</dbReference>
<dbReference type="PROSITE" id="PS00828">
    <property type="entry name" value="RIBOSOMAL_L36"/>
    <property type="match status" value="1"/>
</dbReference>
<accession>A4XBM2</accession>
<evidence type="ECO:0000255" key="1">
    <source>
        <dbReference type="HAMAP-Rule" id="MF_00251"/>
    </source>
</evidence>
<evidence type="ECO:0000305" key="2"/>
<protein>
    <recommendedName>
        <fullName evidence="1">Large ribosomal subunit protein bL36</fullName>
    </recommendedName>
    <alternativeName>
        <fullName evidence="2">50S ribosomal protein L36</fullName>
    </alternativeName>
</protein>